<protein>
    <recommendedName>
        <fullName evidence="1">Ribosomal RNA large subunit methyltransferase H</fullName>
        <ecNumber evidence="1">2.1.1.177</ecNumber>
    </recommendedName>
    <alternativeName>
        <fullName evidence="1">23S rRNA (pseudouridine1915-N3)-methyltransferase</fullName>
    </alternativeName>
    <alternativeName>
        <fullName evidence="1">23S rRNA m3Psi1915 methyltransferase</fullName>
    </alternativeName>
    <alternativeName>
        <fullName evidence="1">rRNA (pseudouridine-N3-)-methyltransferase RlmH</fullName>
    </alternativeName>
</protein>
<proteinExistence type="inferred from homology"/>
<accession>B8IEM4</accession>
<dbReference type="EC" id="2.1.1.177" evidence="1"/>
<dbReference type="EMBL" id="CP001349">
    <property type="protein sequence ID" value="ACL59596.1"/>
    <property type="molecule type" value="Genomic_DNA"/>
</dbReference>
<dbReference type="RefSeq" id="WP_015931230.1">
    <property type="nucleotide sequence ID" value="NC_011894.1"/>
</dbReference>
<dbReference type="SMR" id="B8IEM4"/>
<dbReference type="STRING" id="460265.Mnod_4731"/>
<dbReference type="KEGG" id="mno:Mnod_4731"/>
<dbReference type="eggNOG" id="COG1576">
    <property type="taxonomic scope" value="Bacteria"/>
</dbReference>
<dbReference type="HOGENOM" id="CLU_100552_1_1_5"/>
<dbReference type="OrthoDB" id="9806643at2"/>
<dbReference type="Proteomes" id="UP000008207">
    <property type="component" value="Chromosome"/>
</dbReference>
<dbReference type="GO" id="GO:0005737">
    <property type="term" value="C:cytoplasm"/>
    <property type="evidence" value="ECO:0007669"/>
    <property type="project" value="UniProtKB-SubCell"/>
</dbReference>
<dbReference type="GO" id="GO:0070038">
    <property type="term" value="F:rRNA (pseudouridine-N3-)-methyltransferase activity"/>
    <property type="evidence" value="ECO:0007669"/>
    <property type="project" value="UniProtKB-UniRule"/>
</dbReference>
<dbReference type="CDD" id="cd18081">
    <property type="entry name" value="RlmH-like"/>
    <property type="match status" value="1"/>
</dbReference>
<dbReference type="Gene3D" id="3.40.1280.10">
    <property type="match status" value="1"/>
</dbReference>
<dbReference type="HAMAP" id="MF_00658">
    <property type="entry name" value="23SrRNA_methyltr_H"/>
    <property type="match status" value="1"/>
</dbReference>
<dbReference type="InterPro" id="IPR029028">
    <property type="entry name" value="Alpha/beta_knot_MTases"/>
</dbReference>
<dbReference type="InterPro" id="IPR003742">
    <property type="entry name" value="RlmH-like"/>
</dbReference>
<dbReference type="InterPro" id="IPR029026">
    <property type="entry name" value="tRNA_m1G_MTases_N"/>
</dbReference>
<dbReference type="NCBIfam" id="NF000989">
    <property type="entry name" value="PRK00103.2-3"/>
    <property type="match status" value="1"/>
</dbReference>
<dbReference type="NCBIfam" id="NF000991">
    <property type="entry name" value="PRK00103.2-5"/>
    <property type="match status" value="1"/>
</dbReference>
<dbReference type="PANTHER" id="PTHR33603">
    <property type="entry name" value="METHYLTRANSFERASE"/>
    <property type="match status" value="1"/>
</dbReference>
<dbReference type="PANTHER" id="PTHR33603:SF1">
    <property type="entry name" value="RIBOSOMAL RNA LARGE SUBUNIT METHYLTRANSFERASE H"/>
    <property type="match status" value="1"/>
</dbReference>
<dbReference type="Pfam" id="PF02590">
    <property type="entry name" value="SPOUT_MTase"/>
    <property type="match status" value="1"/>
</dbReference>
<dbReference type="PIRSF" id="PIRSF004505">
    <property type="entry name" value="MT_bac"/>
    <property type="match status" value="1"/>
</dbReference>
<dbReference type="SUPFAM" id="SSF75217">
    <property type="entry name" value="alpha/beta knot"/>
    <property type="match status" value="1"/>
</dbReference>
<keyword id="KW-0963">Cytoplasm</keyword>
<keyword id="KW-0489">Methyltransferase</keyword>
<keyword id="KW-1185">Reference proteome</keyword>
<keyword id="KW-0698">rRNA processing</keyword>
<keyword id="KW-0949">S-adenosyl-L-methionine</keyword>
<keyword id="KW-0808">Transferase</keyword>
<sequence length="162" mass="17201">MRLALVAVGRLKRGPERELVETYRERADALARGLGFSAVQVTELAESRARRAPDRCAEEGAAILDAVPPGSALVVMDEGGRPVTSLALAEQVGAWRDGGRPGLAIVIGGADGLCESVKRRADLLFAFGAATLPHGLVRVLVLEQLYRVMTILAGHPYHRGAP</sequence>
<name>RLMH_METNO</name>
<gene>
    <name evidence="1" type="primary">rlmH</name>
    <name type="ordered locus">Mnod_4731</name>
</gene>
<comment type="function">
    <text evidence="1">Specifically methylates the pseudouridine at position 1915 (m3Psi1915) in 23S rRNA.</text>
</comment>
<comment type="catalytic activity">
    <reaction evidence="1">
        <text>pseudouridine(1915) in 23S rRNA + S-adenosyl-L-methionine = N(3)-methylpseudouridine(1915) in 23S rRNA + S-adenosyl-L-homocysteine + H(+)</text>
        <dbReference type="Rhea" id="RHEA:42752"/>
        <dbReference type="Rhea" id="RHEA-COMP:10221"/>
        <dbReference type="Rhea" id="RHEA-COMP:10222"/>
        <dbReference type="ChEBI" id="CHEBI:15378"/>
        <dbReference type="ChEBI" id="CHEBI:57856"/>
        <dbReference type="ChEBI" id="CHEBI:59789"/>
        <dbReference type="ChEBI" id="CHEBI:65314"/>
        <dbReference type="ChEBI" id="CHEBI:74486"/>
        <dbReference type="EC" id="2.1.1.177"/>
    </reaction>
</comment>
<comment type="subunit">
    <text evidence="1">Homodimer.</text>
</comment>
<comment type="subcellular location">
    <subcellularLocation>
        <location evidence="1">Cytoplasm</location>
    </subcellularLocation>
</comment>
<comment type="similarity">
    <text evidence="1">Belongs to the RNA methyltransferase RlmH family.</text>
</comment>
<organism>
    <name type="scientific">Methylobacterium nodulans (strain LMG 21967 / CNCM I-2342 / ORS 2060)</name>
    <dbReference type="NCBI Taxonomy" id="460265"/>
    <lineage>
        <taxon>Bacteria</taxon>
        <taxon>Pseudomonadati</taxon>
        <taxon>Pseudomonadota</taxon>
        <taxon>Alphaproteobacteria</taxon>
        <taxon>Hyphomicrobiales</taxon>
        <taxon>Methylobacteriaceae</taxon>
        <taxon>Methylobacterium</taxon>
    </lineage>
</organism>
<reference key="1">
    <citation type="submission" date="2009-01" db="EMBL/GenBank/DDBJ databases">
        <title>Complete sequence of chromosome of Methylobacterium nodulans ORS 2060.</title>
        <authorList>
            <consortium name="US DOE Joint Genome Institute"/>
            <person name="Lucas S."/>
            <person name="Copeland A."/>
            <person name="Lapidus A."/>
            <person name="Glavina del Rio T."/>
            <person name="Dalin E."/>
            <person name="Tice H."/>
            <person name="Bruce D."/>
            <person name="Goodwin L."/>
            <person name="Pitluck S."/>
            <person name="Sims D."/>
            <person name="Brettin T."/>
            <person name="Detter J.C."/>
            <person name="Han C."/>
            <person name="Larimer F."/>
            <person name="Land M."/>
            <person name="Hauser L."/>
            <person name="Kyrpides N."/>
            <person name="Ivanova N."/>
            <person name="Marx C.J."/>
            <person name="Richardson P."/>
        </authorList>
    </citation>
    <scope>NUCLEOTIDE SEQUENCE [LARGE SCALE GENOMIC DNA]</scope>
    <source>
        <strain>LMG 21967 / CNCM I-2342 / ORS 2060</strain>
    </source>
</reference>
<evidence type="ECO:0000255" key="1">
    <source>
        <dbReference type="HAMAP-Rule" id="MF_00658"/>
    </source>
</evidence>
<feature type="chain" id="PRO_1000199824" description="Ribosomal RNA large subunit methyltransferase H">
    <location>
        <begin position="1"/>
        <end position="162"/>
    </location>
</feature>
<feature type="binding site" evidence="1">
    <location>
        <position position="108"/>
    </location>
    <ligand>
        <name>S-adenosyl-L-methionine</name>
        <dbReference type="ChEBI" id="CHEBI:59789"/>
    </ligand>
</feature>